<reference key="1">
    <citation type="journal article" date="2009" name="Stand. Genomic Sci.">
        <title>Complete genome sequence of Methanoculleus marisnigri Romesser et al. 1981 type strain JR1.</title>
        <authorList>
            <person name="Anderson I.J."/>
            <person name="Sieprawska-Lupa M."/>
            <person name="Lapidus A."/>
            <person name="Nolan M."/>
            <person name="Copeland A."/>
            <person name="Glavina Del Rio T."/>
            <person name="Tice H."/>
            <person name="Dalin E."/>
            <person name="Barry K."/>
            <person name="Saunders E."/>
            <person name="Han C."/>
            <person name="Brettin T."/>
            <person name="Detter J.C."/>
            <person name="Bruce D."/>
            <person name="Mikhailova N."/>
            <person name="Pitluck S."/>
            <person name="Hauser L."/>
            <person name="Land M."/>
            <person name="Lucas S."/>
            <person name="Richardson P."/>
            <person name="Whitman W.B."/>
            <person name="Kyrpides N.C."/>
        </authorList>
    </citation>
    <scope>NUCLEOTIDE SEQUENCE [LARGE SCALE GENOMIC DNA]</scope>
    <source>
        <strain>ATCC 35101 / DSM 1498 / JR1</strain>
    </source>
</reference>
<proteinExistence type="inferred from homology"/>
<keyword id="KW-0210">Decarboxylase</keyword>
<keyword id="KW-0456">Lyase</keyword>
<keyword id="KW-0663">Pyridoxal phosphate</keyword>
<organism>
    <name type="scientific">Methanoculleus marisnigri (strain ATCC 35101 / DSM 1498 / JR1)</name>
    <dbReference type="NCBI Taxonomy" id="368407"/>
    <lineage>
        <taxon>Archaea</taxon>
        <taxon>Methanobacteriati</taxon>
        <taxon>Methanobacteriota</taxon>
        <taxon>Stenosarchaea group</taxon>
        <taxon>Methanomicrobia</taxon>
        <taxon>Methanomicrobiales</taxon>
        <taxon>Methanomicrobiaceae</taxon>
        <taxon>Methanoculleus</taxon>
    </lineage>
</organism>
<comment type="function">
    <text evidence="1">Catalyzes the decarboxylation of L-tyrosine to produce tyramine for methanofuran biosynthesis. Can also catalyze the decarboxylation of L-aspartate to produce beta-alanine for coenzyme A (CoA) biosynthesis.</text>
</comment>
<comment type="catalytic activity">
    <reaction evidence="1">
        <text>L-tyrosine + H(+) = tyramine + CO2</text>
        <dbReference type="Rhea" id="RHEA:14345"/>
        <dbReference type="ChEBI" id="CHEBI:15378"/>
        <dbReference type="ChEBI" id="CHEBI:16526"/>
        <dbReference type="ChEBI" id="CHEBI:58315"/>
        <dbReference type="ChEBI" id="CHEBI:327995"/>
        <dbReference type="EC" id="4.1.1.25"/>
    </reaction>
</comment>
<comment type="catalytic activity">
    <reaction evidence="1">
        <text>L-aspartate + H(+) = beta-alanine + CO2</text>
        <dbReference type="Rhea" id="RHEA:19497"/>
        <dbReference type="ChEBI" id="CHEBI:15378"/>
        <dbReference type="ChEBI" id="CHEBI:16526"/>
        <dbReference type="ChEBI" id="CHEBI:29991"/>
        <dbReference type="ChEBI" id="CHEBI:57966"/>
        <dbReference type="EC" id="4.1.1.11"/>
    </reaction>
</comment>
<comment type="cofactor">
    <cofactor evidence="1">
        <name>pyridoxal 5'-phosphate</name>
        <dbReference type="ChEBI" id="CHEBI:597326"/>
    </cofactor>
</comment>
<comment type="pathway">
    <text evidence="1">Cofactor biosynthesis; methanofuran biosynthesis.</text>
</comment>
<comment type="pathway">
    <text evidence="1">Cofactor biosynthesis; coenzyme A biosynthesis.</text>
</comment>
<comment type="similarity">
    <text evidence="1">Belongs to the group II decarboxylase family. MfnA subfamily.</text>
</comment>
<name>MFNA_METMJ</name>
<dbReference type="EC" id="4.1.1.11" evidence="1"/>
<dbReference type="EC" id="4.1.1.25" evidence="1"/>
<dbReference type="EMBL" id="CP000562">
    <property type="protein sequence ID" value="ABN57774.1"/>
    <property type="molecule type" value="Genomic_DNA"/>
</dbReference>
<dbReference type="RefSeq" id="WP_011844683.1">
    <property type="nucleotide sequence ID" value="NC_009051.1"/>
</dbReference>
<dbReference type="SMR" id="A3CWM4"/>
<dbReference type="STRING" id="368407.Memar_1848"/>
<dbReference type="GeneID" id="4845930"/>
<dbReference type="GeneID" id="76729924"/>
<dbReference type="KEGG" id="mem:Memar_1848"/>
<dbReference type="eggNOG" id="arCOG00027">
    <property type="taxonomic scope" value="Archaea"/>
</dbReference>
<dbReference type="HOGENOM" id="CLU_028929_2_1_2"/>
<dbReference type="OrthoDB" id="56891at2157"/>
<dbReference type="UniPathway" id="UPA00080"/>
<dbReference type="UniPathway" id="UPA00241"/>
<dbReference type="Proteomes" id="UP000002146">
    <property type="component" value="Chromosome"/>
</dbReference>
<dbReference type="GO" id="GO:0004068">
    <property type="term" value="F:aspartate 1-decarboxylase activity"/>
    <property type="evidence" value="ECO:0007669"/>
    <property type="project" value="UniProtKB-UniRule"/>
</dbReference>
<dbReference type="GO" id="GO:0030170">
    <property type="term" value="F:pyridoxal phosphate binding"/>
    <property type="evidence" value="ECO:0007669"/>
    <property type="project" value="UniProtKB-UniRule"/>
</dbReference>
<dbReference type="GO" id="GO:0004837">
    <property type="term" value="F:tyrosine decarboxylase activity"/>
    <property type="evidence" value="ECO:0007669"/>
    <property type="project" value="UniProtKB-UniRule"/>
</dbReference>
<dbReference type="GO" id="GO:0019752">
    <property type="term" value="P:carboxylic acid metabolic process"/>
    <property type="evidence" value="ECO:0007669"/>
    <property type="project" value="InterPro"/>
</dbReference>
<dbReference type="GO" id="GO:0015937">
    <property type="term" value="P:coenzyme A biosynthetic process"/>
    <property type="evidence" value="ECO:0007669"/>
    <property type="project" value="UniProtKB-UniRule"/>
</dbReference>
<dbReference type="GO" id="GO:2001120">
    <property type="term" value="P:methanofuran biosynthetic process"/>
    <property type="evidence" value="ECO:0007669"/>
    <property type="project" value="UniProtKB-UniRule"/>
</dbReference>
<dbReference type="Gene3D" id="3.90.1150.10">
    <property type="entry name" value="Aspartate Aminotransferase, domain 1"/>
    <property type="match status" value="1"/>
</dbReference>
<dbReference type="Gene3D" id="3.40.640.10">
    <property type="entry name" value="Type I PLP-dependent aspartate aminotransferase-like (Major domain)"/>
    <property type="match status" value="1"/>
</dbReference>
<dbReference type="HAMAP" id="MF_01610">
    <property type="entry name" value="MfnA_decarbox"/>
    <property type="match status" value="1"/>
</dbReference>
<dbReference type="InterPro" id="IPR050477">
    <property type="entry name" value="GrpII_AminoAcid_Decarb"/>
</dbReference>
<dbReference type="InterPro" id="IPR020931">
    <property type="entry name" value="MfnA"/>
</dbReference>
<dbReference type="InterPro" id="IPR002129">
    <property type="entry name" value="PyrdxlP-dep_de-COase"/>
</dbReference>
<dbReference type="InterPro" id="IPR015424">
    <property type="entry name" value="PyrdxlP-dep_Trfase"/>
</dbReference>
<dbReference type="InterPro" id="IPR015421">
    <property type="entry name" value="PyrdxlP-dep_Trfase_major"/>
</dbReference>
<dbReference type="InterPro" id="IPR015422">
    <property type="entry name" value="PyrdxlP-dep_Trfase_small"/>
</dbReference>
<dbReference type="InterPro" id="IPR021115">
    <property type="entry name" value="Pyridoxal-P_BS"/>
</dbReference>
<dbReference type="NCBIfam" id="TIGR03812">
    <property type="entry name" value="tyr_de_CO2_Arch"/>
    <property type="match status" value="1"/>
</dbReference>
<dbReference type="PANTHER" id="PTHR42735">
    <property type="match status" value="1"/>
</dbReference>
<dbReference type="PANTHER" id="PTHR42735:SF6">
    <property type="entry name" value="SPHINGOSINE-1-PHOSPHATE LYASE 1"/>
    <property type="match status" value="1"/>
</dbReference>
<dbReference type="Pfam" id="PF00282">
    <property type="entry name" value="Pyridoxal_deC"/>
    <property type="match status" value="1"/>
</dbReference>
<dbReference type="SUPFAM" id="SSF53383">
    <property type="entry name" value="PLP-dependent transferases"/>
    <property type="match status" value="1"/>
</dbReference>
<dbReference type="PROSITE" id="PS00392">
    <property type="entry name" value="DDC_GAD_HDC_YDC"/>
    <property type="match status" value="1"/>
</dbReference>
<gene>
    <name evidence="1" type="primary">mfnA</name>
    <name type="ordered locus">Memar_1848</name>
</gene>
<evidence type="ECO:0000255" key="1">
    <source>
        <dbReference type="HAMAP-Rule" id="MF_01610"/>
    </source>
</evidence>
<feature type="chain" id="PRO_0000293185" description="Probable L-tyrosine/L-aspartate decarboxylase">
    <location>
        <begin position="1"/>
        <end position="365"/>
    </location>
</feature>
<feature type="modified residue" description="N6-(pyridoxal phosphate)lysine" evidence="1">
    <location>
        <position position="224"/>
    </location>
</feature>
<protein>
    <recommendedName>
        <fullName evidence="1">Probable L-tyrosine/L-aspartate decarboxylase</fullName>
        <shortName evidence="1">TDC/ADC</shortName>
        <ecNumber evidence="1">4.1.1.11</ecNumber>
        <ecNumber evidence="1">4.1.1.25</ecNumber>
    </recommendedName>
</protein>
<sequence>MREVGCPEEDLFSFLSSKRREDLGYRNILSSMCTPPHPVAARAHAMFLETNLGDPGLFPGTAALEDLLVRRLGTLMHLPDAGGYATSGGTESNIQAFRIAKKLKSAKSPNVVVPASSHFSFTKACDILGLEMRTVPLDAGFRMETEAVDGLIDHNTVALVGVVGTTEYGMVDPISRLSEIALDRNVFLHVDAAFGGMVVPFLDRPVPFDFSLPGVSSISVDPHKMGMSTIPAGCLLTRSAEWFSCLNVDTPYLTVKRECTLAGTRPGASVAAAIAVLEYLGMDGMRAVVAGCMENCRRLIEGMETLGYPRAVTPDVNVATFSCERAPVGWRVSTTRNGHMRIVCMPHVTRDVVEQFLVDMGDTDA</sequence>
<accession>A3CWM4</accession>